<dbReference type="EMBL" id="CR861197">
    <property type="protein sequence ID" value="CAH93268.1"/>
    <property type="molecule type" value="mRNA"/>
</dbReference>
<dbReference type="RefSeq" id="NP_001126922.1">
    <property type="nucleotide sequence ID" value="NM_001133450.1"/>
</dbReference>
<dbReference type="RefSeq" id="XP_024092129.1">
    <property type="nucleotide sequence ID" value="XM_024236361.3"/>
</dbReference>
<dbReference type="RefSeq" id="XP_054394425.1">
    <property type="nucleotide sequence ID" value="XM_054538450.2"/>
</dbReference>
<dbReference type="SMR" id="Q5R4P8"/>
<dbReference type="FunCoup" id="Q5R4P8">
    <property type="interactions" value="1553"/>
</dbReference>
<dbReference type="STRING" id="9601.ENSPPYP00000011231"/>
<dbReference type="Ensembl" id="ENSPPYT00000011669.2">
    <property type="protein sequence ID" value="ENSPPYP00000011231.2"/>
    <property type="gene ID" value="ENSPPYG00000010035.3"/>
</dbReference>
<dbReference type="GeneID" id="100173939"/>
<dbReference type="KEGG" id="pon:100173939"/>
<dbReference type="CTD" id="64763"/>
<dbReference type="eggNOG" id="KOG1721">
    <property type="taxonomic scope" value="Eukaryota"/>
</dbReference>
<dbReference type="GeneTree" id="ENSGT00940000161799"/>
<dbReference type="InParanoid" id="Q5R4P8"/>
<dbReference type="OMA" id="DCAKPFN"/>
<dbReference type="OrthoDB" id="8922241at2759"/>
<dbReference type="Proteomes" id="UP000001595">
    <property type="component" value="Chromosome 19"/>
</dbReference>
<dbReference type="GO" id="GO:0005634">
    <property type="term" value="C:nucleus"/>
    <property type="evidence" value="ECO:0007669"/>
    <property type="project" value="UniProtKB-SubCell"/>
</dbReference>
<dbReference type="GO" id="GO:0003677">
    <property type="term" value="F:DNA binding"/>
    <property type="evidence" value="ECO:0007669"/>
    <property type="project" value="UniProtKB-KW"/>
</dbReference>
<dbReference type="GO" id="GO:0008270">
    <property type="term" value="F:zinc ion binding"/>
    <property type="evidence" value="ECO:0007669"/>
    <property type="project" value="UniProtKB-KW"/>
</dbReference>
<dbReference type="FunFam" id="3.30.160.60:FF:000145">
    <property type="entry name" value="Zinc finger protein 574"/>
    <property type="match status" value="1"/>
</dbReference>
<dbReference type="FunFam" id="3.30.160.60:FF:000202">
    <property type="entry name" value="Zinc finger protein 574"/>
    <property type="match status" value="1"/>
</dbReference>
<dbReference type="FunFam" id="3.30.160.60:FF:000788">
    <property type="entry name" value="Zinc finger protein 574"/>
    <property type="match status" value="1"/>
</dbReference>
<dbReference type="FunFam" id="3.30.160.60:FF:001231">
    <property type="entry name" value="Zinc finger protein 574"/>
    <property type="match status" value="1"/>
</dbReference>
<dbReference type="FunFam" id="3.30.160.60:FF:000381">
    <property type="entry name" value="zinc finger protein 574"/>
    <property type="match status" value="3"/>
</dbReference>
<dbReference type="FunFam" id="3.30.160.60:FF:001169">
    <property type="entry name" value="zinc finger protein 574"/>
    <property type="match status" value="1"/>
</dbReference>
<dbReference type="FunFam" id="3.30.160.60:FF:001184">
    <property type="entry name" value="zinc finger protein 574"/>
    <property type="match status" value="1"/>
</dbReference>
<dbReference type="FunFam" id="3.30.160.60:FF:001285">
    <property type="entry name" value="zinc finger protein 574"/>
    <property type="match status" value="1"/>
</dbReference>
<dbReference type="Gene3D" id="3.30.160.60">
    <property type="entry name" value="Classic Zinc Finger"/>
    <property type="match status" value="13"/>
</dbReference>
<dbReference type="InterPro" id="IPR050636">
    <property type="entry name" value="C2H2-ZF_domain-containing"/>
</dbReference>
<dbReference type="InterPro" id="IPR036236">
    <property type="entry name" value="Znf_C2H2_sf"/>
</dbReference>
<dbReference type="InterPro" id="IPR013087">
    <property type="entry name" value="Znf_C2H2_type"/>
</dbReference>
<dbReference type="PANTHER" id="PTHR47772:SF13">
    <property type="entry name" value="GASTRULA ZINC FINGER PROTEIN XLCGF49.1-LIKE-RELATED"/>
    <property type="match status" value="1"/>
</dbReference>
<dbReference type="PANTHER" id="PTHR47772">
    <property type="entry name" value="ZINC FINGER PROTEIN 200"/>
    <property type="match status" value="1"/>
</dbReference>
<dbReference type="Pfam" id="PF00096">
    <property type="entry name" value="zf-C2H2"/>
    <property type="match status" value="6"/>
</dbReference>
<dbReference type="Pfam" id="PF13912">
    <property type="entry name" value="zf-C2H2_6"/>
    <property type="match status" value="2"/>
</dbReference>
<dbReference type="Pfam" id="PF12874">
    <property type="entry name" value="zf-met"/>
    <property type="match status" value="1"/>
</dbReference>
<dbReference type="SMART" id="SM00355">
    <property type="entry name" value="ZnF_C2H2"/>
    <property type="match status" value="20"/>
</dbReference>
<dbReference type="SUPFAM" id="SSF57667">
    <property type="entry name" value="beta-beta-alpha zinc fingers"/>
    <property type="match status" value="11"/>
</dbReference>
<dbReference type="PROSITE" id="PS00028">
    <property type="entry name" value="ZINC_FINGER_C2H2_1"/>
    <property type="match status" value="18"/>
</dbReference>
<dbReference type="PROSITE" id="PS50157">
    <property type="entry name" value="ZINC_FINGER_C2H2_2"/>
    <property type="match status" value="19"/>
</dbReference>
<reference key="1">
    <citation type="submission" date="2004-11" db="EMBL/GenBank/DDBJ databases">
        <authorList>
            <consortium name="The German cDNA consortium"/>
        </authorList>
    </citation>
    <scope>NUCLEOTIDE SEQUENCE [LARGE SCALE MRNA]</scope>
    <source>
        <tissue>Brain cortex</tissue>
    </source>
</reference>
<proteinExistence type="evidence at transcript level"/>
<comment type="function">
    <text>May be involved in transcriptional regulation.</text>
</comment>
<comment type="subcellular location">
    <subcellularLocation>
        <location evidence="4">Nucleus</location>
    </subcellularLocation>
</comment>
<comment type="similarity">
    <text evidence="4">Belongs to the krueppel C2H2-type zinc-finger protein family.</text>
</comment>
<protein>
    <recommendedName>
        <fullName>Zinc finger protein 574</fullName>
    </recommendedName>
</protein>
<gene>
    <name type="primary">ZNF574</name>
</gene>
<feature type="chain" id="PRO_0000274864" description="Zinc finger protein 574">
    <location>
        <begin position="1"/>
        <end position="895"/>
    </location>
</feature>
<feature type="zinc finger region" description="C2H2-type 1" evidence="2">
    <location>
        <begin position="16"/>
        <end position="38"/>
    </location>
</feature>
<feature type="zinc finger region" description="C2H2-type 2" evidence="2">
    <location>
        <begin position="76"/>
        <end position="98"/>
    </location>
</feature>
<feature type="zinc finger region" description="C2H2-type 3" evidence="2">
    <location>
        <begin position="126"/>
        <end position="148"/>
    </location>
</feature>
<feature type="zinc finger region" description="C2H2-type 4" evidence="2">
    <location>
        <begin position="214"/>
        <end position="236"/>
    </location>
</feature>
<feature type="zinc finger region" description="C2H2-type 5" evidence="2">
    <location>
        <begin position="309"/>
        <end position="331"/>
    </location>
</feature>
<feature type="zinc finger region" description="C2H2-type 6" evidence="2">
    <location>
        <begin position="336"/>
        <end position="358"/>
    </location>
</feature>
<feature type="zinc finger region" description="C2H2-type 7" evidence="2">
    <location>
        <begin position="364"/>
        <end position="386"/>
    </location>
</feature>
<feature type="zinc finger region" description="C2H2-type 8" evidence="2">
    <location>
        <begin position="392"/>
        <end position="413"/>
    </location>
</feature>
<feature type="zinc finger region" description="C2H2-type 9" evidence="2">
    <location>
        <begin position="466"/>
        <end position="489"/>
    </location>
</feature>
<feature type="zinc finger region" description="C2H2-type 10" evidence="2">
    <location>
        <begin position="495"/>
        <end position="517"/>
    </location>
</feature>
<feature type="zinc finger region" description="C2H2-type 11" evidence="2">
    <location>
        <begin position="523"/>
        <end position="545"/>
    </location>
</feature>
<feature type="zinc finger region" description="C2H2-type 12" evidence="2">
    <location>
        <begin position="551"/>
        <end position="573"/>
    </location>
</feature>
<feature type="zinc finger region" description="C2H2-type 13" evidence="2">
    <location>
        <begin position="579"/>
        <end position="601"/>
    </location>
</feature>
<feature type="zinc finger region" description="C2H2-type 14" evidence="2">
    <location>
        <begin position="607"/>
        <end position="630"/>
    </location>
</feature>
<feature type="zinc finger region" description="C2H2-type 15; degenerate" evidence="2">
    <location>
        <begin position="636"/>
        <end position="659"/>
    </location>
</feature>
<feature type="zinc finger region" description="C2H2-type 16" evidence="2">
    <location>
        <begin position="667"/>
        <end position="689"/>
    </location>
</feature>
<feature type="zinc finger region" description="C2H2-type 17" evidence="2">
    <location>
        <begin position="737"/>
        <end position="759"/>
    </location>
</feature>
<feature type="zinc finger region" description="C2H2-type 18" evidence="2">
    <location>
        <begin position="765"/>
        <end position="787"/>
    </location>
</feature>
<feature type="zinc finger region" description="C2H2-type 19" evidence="2">
    <location>
        <begin position="793"/>
        <end position="815"/>
    </location>
</feature>
<feature type="zinc finger region" description="C2H2-type 20" evidence="2">
    <location>
        <begin position="821"/>
        <end position="843"/>
    </location>
</feature>
<feature type="region of interest" description="Disordered" evidence="3">
    <location>
        <begin position="239"/>
        <end position="301"/>
    </location>
</feature>
<feature type="region of interest" description="Disordered" evidence="3">
    <location>
        <begin position="434"/>
        <end position="460"/>
    </location>
</feature>
<feature type="region of interest" description="Disordered" evidence="3">
    <location>
        <begin position="687"/>
        <end position="732"/>
    </location>
</feature>
<feature type="compositionally biased region" description="Polar residues" evidence="3">
    <location>
        <begin position="247"/>
        <end position="257"/>
    </location>
</feature>
<feature type="compositionally biased region" description="Basic and acidic residues" evidence="3">
    <location>
        <begin position="274"/>
        <end position="287"/>
    </location>
</feature>
<feature type="compositionally biased region" description="Low complexity" evidence="3">
    <location>
        <begin position="707"/>
        <end position="731"/>
    </location>
</feature>
<feature type="modified residue" description="Phosphoserine" evidence="1">
    <location>
        <position position="164"/>
    </location>
</feature>
<feature type="modified residue" description="Phosphoserine" evidence="1">
    <location>
        <position position="298"/>
    </location>
</feature>
<feature type="modified residue" description="Phosphoserine" evidence="1">
    <location>
        <position position="717"/>
    </location>
</feature>
<feature type="modified residue" description="Phosphothreonine" evidence="1">
    <location>
        <position position="724"/>
    </location>
</feature>
<feature type="modified residue" description="Phosphoserine" evidence="1">
    <location>
        <position position="728"/>
    </location>
</feature>
<feature type="modified residue" description="Asymmetric dimethylarginine" evidence="1">
    <location>
        <position position="831"/>
    </location>
</feature>
<sequence>MTEESEETVLYIEHRYVCSECNQLYGSLEEVLMHQNSHVPQQHFELVGVADPGVTVATDTASGTGLYQTLVQESQYQCLECGQLLMSPSQLLEHQELHLKMMAPQEAVPAEPPPKAPPLSSSTIHYECVDCKALFASQELWLNHRQTHLRATPTKAPAPVVLGSPVVLGPPVGQARVAVEHSYRKAEEGGEGATVPSAAATTTEVVTEVELLLYKCSECSQLFQLPADFLEHQATHFPAPVPESQEPALQQEVQASSPAEVPVSQPDPLPASDHSYELRNGEAIGRDRRGRRARRNNSGEAGGAATQELFCSACDQLFLSPHQLQQHLRSHREGVFKCPLCSRVFPSPSSLDQHLGDHSSESHFLCVDCGLAFGTEALLLAHRRAHTPNPLHSCPCGKTFVNLTKFLYHRRTHGVGGVPLPTTPVPPEEPVIGFPEPAPAETGEPEAPEPPVSEETSAGPAAPGTYRCLLCSREFGKALQLTRHQRFVHRLERRHKCSICGKMFKKKSHVRNHLRTHTGERPFPCPDCSKPFNSPANLARHRLTHTGERPYRCGDCGKAFTQSSTLRQHRLVHAQHFPYRCQECGVRFHRPYRLLMHRYHHTGEYPYKCRECPRSFLLRRLLEVHQLVVHAGRQPHRCPSCGAAFPSSLRLREHRCAAAAAQAPRRFECGTCGKKVGSAARLQAHEAAHAAAGPGEVLAKEPPAPRAPRATRAPVASPAALGGTATASPAPARRRGLECSECKKLFSTETSLQVHRRIHTGERPYPCPDCGKAFRQSTHLKDHRRLHTGERPFACEVCGKAFAISMRLAEHRRIHTGERPYSCPDCGKSYRSFSNLWKHRKTHQQQHQAAVRQQLAEAEAAVGLAVMETAVEALPLVEAIEIYPLAEAEGVQISG</sequence>
<keyword id="KW-0238">DNA-binding</keyword>
<keyword id="KW-0479">Metal-binding</keyword>
<keyword id="KW-0488">Methylation</keyword>
<keyword id="KW-0539">Nucleus</keyword>
<keyword id="KW-0597">Phosphoprotein</keyword>
<keyword id="KW-1185">Reference proteome</keyword>
<keyword id="KW-0677">Repeat</keyword>
<keyword id="KW-0804">Transcription</keyword>
<keyword id="KW-0805">Transcription regulation</keyword>
<keyword id="KW-0862">Zinc</keyword>
<keyword id="KW-0863">Zinc-finger</keyword>
<organism>
    <name type="scientific">Pongo abelii</name>
    <name type="common">Sumatran orangutan</name>
    <name type="synonym">Pongo pygmaeus abelii</name>
    <dbReference type="NCBI Taxonomy" id="9601"/>
    <lineage>
        <taxon>Eukaryota</taxon>
        <taxon>Metazoa</taxon>
        <taxon>Chordata</taxon>
        <taxon>Craniata</taxon>
        <taxon>Vertebrata</taxon>
        <taxon>Euteleostomi</taxon>
        <taxon>Mammalia</taxon>
        <taxon>Eutheria</taxon>
        <taxon>Euarchontoglires</taxon>
        <taxon>Primates</taxon>
        <taxon>Haplorrhini</taxon>
        <taxon>Catarrhini</taxon>
        <taxon>Hominidae</taxon>
        <taxon>Pongo</taxon>
    </lineage>
</organism>
<accession>Q5R4P8</accession>
<name>ZN574_PONAB</name>
<evidence type="ECO:0000250" key="1">
    <source>
        <dbReference type="UniProtKB" id="Q6ZN55"/>
    </source>
</evidence>
<evidence type="ECO:0000255" key="2">
    <source>
        <dbReference type="PROSITE-ProRule" id="PRU00042"/>
    </source>
</evidence>
<evidence type="ECO:0000256" key="3">
    <source>
        <dbReference type="SAM" id="MobiDB-lite"/>
    </source>
</evidence>
<evidence type="ECO:0000305" key="4"/>